<proteinExistence type="inferred from homology"/>
<dbReference type="EMBL" id="CP000305">
    <property type="protein sequence ID" value="ABG18981.1"/>
    <property type="molecule type" value="Genomic_DNA"/>
</dbReference>
<dbReference type="EMBL" id="ACNQ01000017">
    <property type="protein sequence ID" value="EEO75106.1"/>
    <property type="molecule type" value="Genomic_DNA"/>
</dbReference>
<dbReference type="RefSeq" id="WP_002208766.1">
    <property type="nucleotide sequence ID" value="NZ_ACNQ01000017.1"/>
</dbReference>
<dbReference type="SMR" id="Q1CG99"/>
<dbReference type="KEGG" id="ypn:YPN_2653"/>
<dbReference type="HOGENOM" id="CLU_035023_2_2_6"/>
<dbReference type="Proteomes" id="UP000008936">
    <property type="component" value="Chromosome"/>
</dbReference>
<dbReference type="GO" id="GO:0005886">
    <property type="term" value="C:plasma membrane"/>
    <property type="evidence" value="ECO:0007669"/>
    <property type="project" value="UniProtKB-SubCell"/>
</dbReference>
<dbReference type="GO" id="GO:0008324">
    <property type="term" value="F:monoatomic cation transmembrane transporter activity"/>
    <property type="evidence" value="ECO:0007669"/>
    <property type="project" value="InterPro"/>
</dbReference>
<dbReference type="GO" id="GO:0006813">
    <property type="term" value="P:potassium ion transport"/>
    <property type="evidence" value="ECO:0007669"/>
    <property type="project" value="InterPro"/>
</dbReference>
<dbReference type="FunFam" id="3.30.70.1450:FF:000003">
    <property type="entry name" value="Putative transport protein YbjL"/>
    <property type="match status" value="1"/>
</dbReference>
<dbReference type="Gene3D" id="3.30.70.1450">
    <property type="entry name" value="Regulator of K+ conductance, C-terminal domain"/>
    <property type="match status" value="2"/>
</dbReference>
<dbReference type="HAMAP" id="MF_01015">
    <property type="entry name" value="YbjL"/>
    <property type="match status" value="1"/>
</dbReference>
<dbReference type="InterPro" id="IPR050144">
    <property type="entry name" value="AAE_transporter"/>
</dbReference>
<dbReference type="InterPro" id="IPR006037">
    <property type="entry name" value="RCK_C"/>
</dbReference>
<dbReference type="InterPro" id="IPR036721">
    <property type="entry name" value="RCK_C_sf"/>
</dbReference>
<dbReference type="InterPro" id="IPR023017">
    <property type="entry name" value="Transp_YbjL_put"/>
</dbReference>
<dbReference type="InterPro" id="IPR006512">
    <property type="entry name" value="YidE_YbjL"/>
</dbReference>
<dbReference type="NCBIfam" id="NF003440">
    <property type="entry name" value="PRK04972.1"/>
    <property type="match status" value="1"/>
</dbReference>
<dbReference type="NCBIfam" id="TIGR01625">
    <property type="entry name" value="YidE_YbjL_dupl"/>
    <property type="match status" value="2"/>
</dbReference>
<dbReference type="PANTHER" id="PTHR30445">
    <property type="entry name" value="K(+)_H(+) ANTIPORTER SUBUNIT KHTT"/>
    <property type="match status" value="1"/>
</dbReference>
<dbReference type="PANTHER" id="PTHR30445:SF10">
    <property type="entry name" value="TRANSPORT PROTEIN YBJL-RELATED"/>
    <property type="match status" value="1"/>
</dbReference>
<dbReference type="Pfam" id="PF06826">
    <property type="entry name" value="Asp-Al_Ex"/>
    <property type="match status" value="2"/>
</dbReference>
<dbReference type="Pfam" id="PF02080">
    <property type="entry name" value="TrkA_C"/>
    <property type="match status" value="2"/>
</dbReference>
<dbReference type="SUPFAM" id="SSF116726">
    <property type="entry name" value="TrkA C-terminal domain-like"/>
    <property type="match status" value="2"/>
</dbReference>
<dbReference type="PROSITE" id="PS51202">
    <property type="entry name" value="RCK_C"/>
    <property type="match status" value="2"/>
</dbReference>
<protein>
    <recommendedName>
        <fullName evidence="1">Putative transport protein YPN_2653</fullName>
    </recommendedName>
</protein>
<name>Y2653_YERPN</name>
<reference key="1">
    <citation type="journal article" date="2006" name="J. Bacteriol.">
        <title>Complete genome sequence of Yersinia pestis strains Antiqua and Nepal516: evidence of gene reduction in an emerging pathogen.</title>
        <authorList>
            <person name="Chain P.S.G."/>
            <person name="Hu P."/>
            <person name="Malfatti S.A."/>
            <person name="Radnedge L."/>
            <person name="Larimer F."/>
            <person name="Vergez L.M."/>
            <person name="Worsham P."/>
            <person name="Chu M.C."/>
            <person name="Andersen G.L."/>
        </authorList>
    </citation>
    <scope>NUCLEOTIDE SEQUENCE [LARGE SCALE GENOMIC DNA]</scope>
    <source>
        <strain>Nepal516</strain>
    </source>
</reference>
<reference key="2">
    <citation type="submission" date="2009-04" db="EMBL/GenBank/DDBJ databases">
        <title>Yersinia pestis Nepal516A whole genome shotgun sequencing project.</title>
        <authorList>
            <person name="Plunkett G. III"/>
            <person name="Anderson B.D."/>
            <person name="Baumler D.J."/>
            <person name="Burland V."/>
            <person name="Cabot E.L."/>
            <person name="Glasner J.D."/>
            <person name="Mau B."/>
            <person name="Neeno-Eckwall E."/>
            <person name="Perna N.T."/>
            <person name="Munk A.C."/>
            <person name="Tapia R."/>
            <person name="Green L.D."/>
            <person name="Rogers Y.C."/>
            <person name="Detter J.C."/>
            <person name="Bruce D.C."/>
            <person name="Brettin T.S."/>
        </authorList>
    </citation>
    <scope>NUCLEOTIDE SEQUENCE [LARGE SCALE GENOMIC DNA]</scope>
    <source>
        <strain>Nepal516</strain>
    </source>
</reference>
<gene>
    <name type="ordered locus">YPN_2653</name>
    <name type="ORF">YP516_2992</name>
</gene>
<sequence>MNINVANLLNGNYILLLFVVLALGLCLGKLRLGSIQLGNAIGVLVVSLLLGQQHFAINTEALNLGFMLFIFCVGVEAGPNFFSIFFRDGKNYLMLALVMVGSAMILALGLGKLFGWDIGLTAGMLAGSMTSTPVLVGAGDTLRHTMANGSSLQQAQDNLSLGYALTYLIGLVSLILGARYLPKLQHQDLPTSAQQIARERGLDTDSQRKVYLPVIRAYRVGPELVAWADGKNLRELGIYRQTGCYIERIRRNGILANPDGDAVLQVGDEISLVGYPDAHSRLDPSFRNGKEVFDRDLLDMRIVTEEIVVKNSNAVGKRLSHLKLTDHGCFLNRVIRSQIEMPIDDNVVLNKGDVLQVSGDARRVKSVAEKIGFISIHSQVTDLLAFCSFFILGLMIGLITFQFSNFSFGIGNAAGLLLAGIMLGFLRANHPTFGYIPQGALNMVKEFGLMVFMAGVGLSAGGGINSSLGAVGGQMLISGLIVSLVPVVICFVFGAYVLRMNRALLFGAIMGARTCAPAMDIISDTARSNIPALGYAGTYAIANVLLTLAGSLIVILWPGILG</sequence>
<organism>
    <name type="scientific">Yersinia pestis bv. Antiqua (strain Nepal516)</name>
    <dbReference type="NCBI Taxonomy" id="377628"/>
    <lineage>
        <taxon>Bacteria</taxon>
        <taxon>Pseudomonadati</taxon>
        <taxon>Pseudomonadota</taxon>
        <taxon>Gammaproteobacteria</taxon>
        <taxon>Enterobacterales</taxon>
        <taxon>Yersiniaceae</taxon>
        <taxon>Yersinia</taxon>
    </lineage>
</organism>
<accession>Q1CG99</accession>
<accession>C4GW06</accession>
<comment type="subcellular location">
    <subcellularLocation>
        <location evidence="1">Cell membrane</location>
        <topology evidence="1">Multi-pass membrane protein</topology>
    </subcellularLocation>
</comment>
<comment type="similarity">
    <text evidence="1">Belongs to the AAE transporter (TC 2.A.81) family. YbjL subfamily.</text>
</comment>
<evidence type="ECO:0000255" key="1">
    <source>
        <dbReference type="HAMAP-Rule" id="MF_01015"/>
    </source>
</evidence>
<keyword id="KW-1003">Cell membrane</keyword>
<keyword id="KW-0472">Membrane</keyword>
<keyword id="KW-0677">Repeat</keyword>
<keyword id="KW-0812">Transmembrane</keyword>
<keyword id="KW-1133">Transmembrane helix</keyword>
<keyword id="KW-0813">Transport</keyword>
<feature type="chain" id="PRO_0000329153" description="Putative transport protein YPN_2653">
    <location>
        <begin position="1"/>
        <end position="562"/>
    </location>
</feature>
<feature type="transmembrane region" description="Helical" evidence="1">
    <location>
        <begin position="8"/>
        <end position="28"/>
    </location>
</feature>
<feature type="transmembrane region" description="Helical" evidence="1">
    <location>
        <begin position="37"/>
        <end position="57"/>
    </location>
</feature>
<feature type="transmembrane region" description="Helical" evidence="1">
    <location>
        <begin position="66"/>
        <end position="86"/>
    </location>
</feature>
<feature type="transmembrane region" description="Helical" evidence="1">
    <location>
        <begin position="94"/>
        <end position="114"/>
    </location>
</feature>
<feature type="transmembrane region" description="Helical" evidence="1">
    <location>
        <begin position="118"/>
        <end position="138"/>
    </location>
</feature>
<feature type="transmembrane region" description="Helical" evidence="1">
    <location>
        <begin position="158"/>
        <end position="178"/>
    </location>
</feature>
<feature type="transmembrane region" description="Helical" evidence="1">
    <location>
        <begin position="383"/>
        <end position="403"/>
    </location>
</feature>
<feature type="transmembrane region" description="Helical" evidence="1">
    <location>
        <begin position="406"/>
        <end position="426"/>
    </location>
</feature>
<feature type="transmembrane region" description="Helical" evidence="1">
    <location>
        <begin position="447"/>
        <end position="467"/>
    </location>
</feature>
<feature type="transmembrane region" description="Helical" evidence="1">
    <location>
        <begin position="475"/>
        <end position="495"/>
    </location>
</feature>
<feature type="transmembrane region" description="Helical" evidence="1">
    <location>
        <begin position="541"/>
        <end position="561"/>
    </location>
</feature>
<feature type="domain" description="RCK C-terminal 1" evidence="1">
    <location>
        <begin position="202"/>
        <end position="288"/>
    </location>
</feature>
<feature type="domain" description="RCK C-terminal 2" evidence="1">
    <location>
        <begin position="290"/>
        <end position="373"/>
    </location>
</feature>